<name>QUEF_ECOBW</name>
<reference key="1">
    <citation type="journal article" date="2009" name="J. Bacteriol.">
        <title>Genomic sequencing reveals regulatory mutations and recombinational events in the widely used MC4100 lineage of Escherichia coli K-12.</title>
        <authorList>
            <person name="Ferenci T."/>
            <person name="Zhou Z."/>
            <person name="Betteridge T."/>
            <person name="Ren Y."/>
            <person name="Liu Y."/>
            <person name="Feng L."/>
            <person name="Reeves P.R."/>
            <person name="Wang L."/>
        </authorList>
    </citation>
    <scope>NUCLEOTIDE SEQUENCE [LARGE SCALE GENOMIC DNA]</scope>
    <source>
        <strain>K12 / MC4100 / BW2952</strain>
    </source>
</reference>
<accession>C4ZZU9</accession>
<sequence>MSSYANHQALAGLTLGKSTDYRDTYDASLLQGVPRSLNRDPLGLKADNLPFHGTDIWTLYELSWLNAKGLPQVAVGHVELDYTSVNLIESKSFKLYLNSFNQTRFNNWDEVRQTLERDLSTCAQGKISVALYRLDELEGQPIGHFNGTCIDDQDITIDNYEFTTDYLENATCGEKVVEETLVSHLLKSNCLITHQPDWGSLQIQYRGRQIDREKLLRYLVSFRHHNEFHEQCVERIFNDLLRFCQPEKLSVYARYTRRGGLDINPWRSNSDFVPSTTRLVRQ</sequence>
<gene>
    <name evidence="1" type="primary">queF</name>
    <name type="ordered locus">BWG_2532</name>
</gene>
<evidence type="ECO:0000255" key="1">
    <source>
        <dbReference type="HAMAP-Rule" id="MF_00817"/>
    </source>
</evidence>
<keyword id="KW-0963">Cytoplasm</keyword>
<keyword id="KW-0521">NADP</keyword>
<keyword id="KW-0560">Oxidoreductase</keyword>
<keyword id="KW-0671">Queuosine biosynthesis</keyword>
<protein>
    <recommendedName>
        <fullName evidence="1">NADPH-dependent 7-cyano-7-deazaguanine reductase</fullName>
        <ecNumber evidence="1">1.7.1.13</ecNumber>
    </recommendedName>
    <alternativeName>
        <fullName evidence="1">7-cyano-7-carbaguanine reductase</fullName>
    </alternativeName>
    <alternativeName>
        <fullName evidence="1">NADPH-dependent nitrile oxidoreductase</fullName>
    </alternativeName>
    <alternativeName>
        <fullName evidence="1">PreQ(0) reductase</fullName>
    </alternativeName>
</protein>
<feature type="chain" id="PRO_1000213062" description="NADPH-dependent 7-cyano-7-deazaguanine reductase">
    <location>
        <begin position="1"/>
        <end position="282"/>
    </location>
</feature>
<feature type="active site" description="Thioimide intermediate" evidence="1">
    <location>
        <position position="190"/>
    </location>
</feature>
<feature type="active site" description="Proton donor" evidence="1">
    <location>
        <position position="197"/>
    </location>
</feature>
<feature type="binding site" evidence="1">
    <location>
        <begin position="88"/>
        <end position="90"/>
    </location>
    <ligand>
        <name>substrate</name>
    </ligand>
</feature>
<feature type="binding site" evidence="1">
    <location>
        <begin position="90"/>
        <end position="91"/>
    </location>
    <ligand>
        <name>NADPH</name>
        <dbReference type="ChEBI" id="CHEBI:57783"/>
    </ligand>
</feature>
<feature type="binding site" evidence="1">
    <location>
        <begin position="229"/>
        <end position="230"/>
    </location>
    <ligand>
        <name>substrate</name>
    </ligand>
</feature>
<feature type="binding site" evidence="1">
    <location>
        <begin position="258"/>
        <end position="259"/>
    </location>
    <ligand>
        <name>NADPH</name>
        <dbReference type="ChEBI" id="CHEBI:57783"/>
    </ligand>
</feature>
<dbReference type="EC" id="1.7.1.13" evidence="1"/>
<dbReference type="EMBL" id="CP001396">
    <property type="protein sequence ID" value="ACR61894.1"/>
    <property type="molecule type" value="Genomic_DNA"/>
</dbReference>
<dbReference type="RefSeq" id="WP_000100421.1">
    <property type="nucleotide sequence ID" value="NC_012759.1"/>
</dbReference>
<dbReference type="SMR" id="C4ZZU9"/>
<dbReference type="KEGG" id="ebw:BWG_2532"/>
<dbReference type="HOGENOM" id="CLU_054738_0_0_6"/>
<dbReference type="UniPathway" id="UPA00392"/>
<dbReference type="GO" id="GO:0005737">
    <property type="term" value="C:cytoplasm"/>
    <property type="evidence" value="ECO:0007669"/>
    <property type="project" value="UniProtKB-SubCell"/>
</dbReference>
<dbReference type="GO" id="GO:0033739">
    <property type="term" value="F:preQ1 synthase activity"/>
    <property type="evidence" value="ECO:0007669"/>
    <property type="project" value="UniProtKB-UniRule"/>
</dbReference>
<dbReference type="GO" id="GO:0008616">
    <property type="term" value="P:queuosine biosynthetic process"/>
    <property type="evidence" value="ECO:0007669"/>
    <property type="project" value="UniProtKB-UniRule"/>
</dbReference>
<dbReference type="GO" id="GO:0006400">
    <property type="term" value="P:tRNA modification"/>
    <property type="evidence" value="ECO:0007669"/>
    <property type="project" value="UniProtKB-UniRule"/>
</dbReference>
<dbReference type="FunFam" id="3.30.1130.10:FF:000004">
    <property type="entry name" value="NADPH-dependent 7-cyano-7-deazaguanine reductase"/>
    <property type="match status" value="1"/>
</dbReference>
<dbReference type="FunFam" id="3.30.1130.10:FF:000006">
    <property type="entry name" value="NADPH-dependent 7-cyano-7-deazaguanine reductase"/>
    <property type="match status" value="1"/>
</dbReference>
<dbReference type="Gene3D" id="3.30.1130.10">
    <property type="match status" value="2"/>
</dbReference>
<dbReference type="HAMAP" id="MF_00817">
    <property type="entry name" value="QueF_type2"/>
    <property type="match status" value="1"/>
</dbReference>
<dbReference type="InterPro" id="IPR043133">
    <property type="entry name" value="GTP-CH-I_C/QueF"/>
</dbReference>
<dbReference type="InterPro" id="IPR050084">
    <property type="entry name" value="NADPH_dep_7-cyano-7-deazaG_red"/>
</dbReference>
<dbReference type="InterPro" id="IPR029500">
    <property type="entry name" value="QueF"/>
</dbReference>
<dbReference type="InterPro" id="IPR029139">
    <property type="entry name" value="QueF_N"/>
</dbReference>
<dbReference type="InterPro" id="IPR016428">
    <property type="entry name" value="QueF_type2"/>
</dbReference>
<dbReference type="NCBIfam" id="TIGR03138">
    <property type="entry name" value="QueF"/>
    <property type="match status" value="1"/>
</dbReference>
<dbReference type="PANTHER" id="PTHR34354">
    <property type="entry name" value="NADPH-DEPENDENT 7-CYANO-7-DEAZAGUANINE REDUCTASE"/>
    <property type="match status" value="1"/>
</dbReference>
<dbReference type="PANTHER" id="PTHR34354:SF1">
    <property type="entry name" value="NADPH-DEPENDENT 7-CYANO-7-DEAZAGUANINE REDUCTASE"/>
    <property type="match status" value="1"/>
</dbReference>
<dbReference type="Pfam" id="PF14489">
    <property type="entry name" value="QueF"/>
    <property type="match status" value="1"/>
</dbReference>
<dbReference type="Pfam" id="PF14819">
    <property type="entry name" value="QueF_N"/>
    <property type="match status" value="1"/>
</dbReference>
<dbReference type="PIRSF" id="PIRSF004750">
    <property type="entry name" value="Nitrile_oxidored_YqcD_prd"/>
    <property type="match status" value="1"/>
</dbReference>
<dbReference type="SUPFAM" id="SSF55620">
    <property type="entry name" value="Tetrahydrobiopterin biosynthesis enzymes-like"/>
    <property type="match status" value="1"/>
</dbReference>
<comment type="function">
    <text evidence="1">Catalyzes the NADPH-dependent reduction of 7-cyano-7-deazaguanine (preQ0) to 7-aminomethyl-7-deazaguanine (preQ1).</text>
</comment>
<comment type="catalytic activity">
    <reaction evidence="1">
        <text>7-aminomethyl-7-carbaguanine + 2 NADP(+) = 7-cyano-7-deazaguanine + 2 NADPH + 3 H(+)</text>
        <dbReference type="Rhea" id="RHEA:13409"/>
        <dbReference type="ChEBI" id="CHEBI:15378"/>
        <dbReference type="ChEBI" id="CHEBI:45075"/>
        <dbReference type="ChEBI" id="CHEBI:57783"/>
        <dbReference type="ChEBI" id="CHEBI:58349"/>
        <dbReference type="ChEBI" id="CHEBI:58703"/>
        <dbReference type="EC" id="1.7.1.13"/>
    </reaction>
</comment>
<comment type="pathway">
    <text evidence="1">tRNA modification; tRNA-queuosine biosynthesis.</text>
</comment>
<comment type="subunit">
    <text evidence="1">Homodimer.</text>
</comment>
<comment type="subcellular location">
    <subcellularLocation>
        <location evidence="1">Cytoplasm</location>
    </subcellularLocation>
</comment>
<comment type="similarity">
    <text evidence="1">Belongs to the GTP cyclohydrolase I family. QueF type 2 subfamily.</text>
</comment>
<organism>
    <name type="scientific">Escherichia coli (strain K12 / MC4100 / BW2952)</name>
    <dbReference type="NCBI Taxonomy" id="595496"/>
    <lineage>
        <taxon>Bacteria</taxon>
        <taxon>Pseudomonadati</taxon>
        <taxon>Pseudomonadota</taxon>
        <taxon>Gammaproteobacteria</taxon>
        <taxon>Enterobacterales</taxon>
        <taxon>Enterobacteriaceae</taxon>
        <taxon>Escherichia</taxon>
    </lineage>
</organism>
<proteinExistence type="inferred from homology"/>